<name>IOD2_AQUCT</name>
<protein>
    <recommendedName>
        <fullName>Type II iodothyronine deiodinase</fullName>
        <ecNumber evidence="1">1.21.99.4</ecNumber>
    </recommendedName>
    <alternativeName>
        <fullName>5DII</fullName>
    </alternativeName>
    <alternativeName>
        <fullName>DIOII</fullName>
    </alternativeName>
    <alternativeName>
        <fullName>Type 2 DI</fullName>
    </alternativeName>
    <alternativeName>
        <fullName>Type-II 5'-deiodinase</fullName>
    </alternativeName>
</protein>
<feature type="chain" id="PRO_0000154322" description="Type II iodothyronine deiodinase">
    <location>
        <begin position="1"/>
        <end position="264"/>
    </location>
</feature>
<feature type="topological domain" description="Lumenal" evidence="1">
    <location>
        <begin position="1"/>
        <end position="7"/>
    </location>
</feature>
<feature type="transmembrane region" description="Helical; Signal-anchor for type III membrane protein" evidence="2">
    <location>
        <begin position="8"/>
        <end position="28"/>
    </location>
</feature>
<feature type="topological domain" description="Cytoplasmic" evidence="1">
    <location>
        <begin position="29"/>
        <end position="264"/>
    </location>
</feature>
<feature type="active site" evidence="1">
    <location>
        <position position="124"/>
    </location>
</feature>
<feature type="non-standard amino acid" description="Selenocysteine" evidence="1">
    <location>
        <position position="124"/>
    </location>
</feature>
<gene>
    <name type="primary">dio2</name>
    <name type="synonym">itdi2</name>
    <name type="synonym">txdi2</name>
</gene>
<organism>
    <name type="scientific">Aquarana catesbeiana</name>
    <name type="common">American bullfrog</name>
    <name type="synonym">Rana catesbeiana</name>
    <dbReference type="NCBI Taxonomy" id="8400"/>
    <lineage>
        <taxon>Eukaryota</taxon>
        <taxon>Metazoa</taxon>
        <taxon>Chordata</taxon>
        <taxon>Craniata</taxon>
        <taxon>Vertebrata</taxon>
        <taxon>Euteleostomi</taxon>
        <taxon>Amphibia</taxon>
        <taxon>Batrachia</taxon>
        <taxon>Anura</taxon>
        <taxon>Neobatrachia</taxon>
        <taxon>Ranoidea</taxon>
        <taxon>Ranidae</taxon>
        <taxon>Aquarana</taxon>
    </lineage>
</organism>
<sequence>MGLLSVDLLITLQILPGFFSNCLFLALYDSVVLVKHVLLQLNRSKSSHGQWRRMLTPEGLRCVWNSFLLDAYKQVKLGGDAPNSNVIHVTDKNSSSGKPGTPCHLLDFASSERPLVVNFGSATUPPFISQLPAFSKMVEEFSAVADFLLVYIDEAHPSDGWAAPGISSYEVKKHRNQEDRCAAANKLLEQYSLPPQCQVVADCMDNNTNAAYGVSFERVCIVQRQKIVYLGGKGPFFYNLQEVRQWLELTFGKKAESGQTGTEK</sequence>
<evidence type="ECO:0000250" key="1">
    <source>
        <dbReference type="UniProtKB" id="Q92813"/>
    </source>
</evidence>
<evidence type="ECO:0000255" key="2"/>
<evidence type="ECO:0000255" key="3">
    <source>
        <dbReference type="PROSITE-ProRule" id="PRU10107"/>
    </source>
</evidence>
<evidence type="ECO:0000269" key="4">
    <source>
    </source>
</evidence>
<evidence type="ECO:0000305" key="5"/>
<evidence type="ECO:0000305" key="6">
    <source>
    </source>
</evidence>
<comment type="function">
    <text evidence="1 4">Plays a crucial role in the metabolism of thyroid hormones (TH) and has specific roles in TH activation and inactivation by deiodination (PubMed:7592917). Catalyzes the deiodination of L-thyroxine (T4) to 3,5,3'-triiodothyronine (T3) and 3',5'-diiodothyronine (3',5'-T2) to 3'-monoiodothyronine (3'-T1) via outer-ring deiodination (ORD) (By similarity). Catalyzes the deiodination of 3,3',5'-triiodothyronine (rT3) to 3,3'-diiodothyronine (3,3'-T2) via ORD (PubMed:7592917). Catalyzes the phenolic ring deiodinations of 3,3',5'-triiodothyronamine and 3',5'- diiodothyronamine (By similarity).</text>
</comment>
<comment type="catalytic activity">
    <reaction evidence="3">
        <text>3,3',5-triiodo-L-thyronine + iodide + A + H(+) = L-thyroxine + AH2</text>
        <dbReference type="Rhea" id="RHEA:19745"/>
        <dbReference type="ChEBI" id="CHEBI:13193"/>
        <dbReference type="ChEBI" id="CHEBI:15378"/>
        <dbReference type="ChEBI" id="CHEBI:16382"/>
        <dbReference type="ChEBI" id="CHEBI:17499"/>
        <dbReference type="ChEBI" id="CHEBI:58448"/>
        <dbReference type="ChEBI" id="CHEBI:533015"/>
        <dbReference type="EC" id="1.21.99.4"/>
    </reaction>
    <physiologicalReaction direction="right-to-left" evidence="1">
        <dbReference type="Rhea" id="RHEA:19747"/>
    </physiologicalReaction>
</comment>
<comment type="catalytic activity">
    <reaction evidence="4">
        <text>3,3'-diiodo-L-thyronine + iodide + A + H(+) = 3,3',5'-triiodo-L-thyronine + AH2</text>
        <dbReference type="Rhea" id="RHEA:82575"/>
        <dbReference type="ChEBI" id="CHEBI:13193"/>
        <dbReference type="ChEBI" id="CHEBI:15378"/>
        <dbReference type="ChEBI" id="CHEBI:16382"/>
        <dbReference type="ChEBI" id="CHEBI:17499"/>
        <dbReference type="ChEBI" id="CHEBI:57261"/>
        <dbReference type="ChEBI" id="CHEBI:176514"/>
    </reaction>
    <physiologicalReaction direction="right-to-left" evidence="6">
        <dbReference type="Rhea" id="RHEA:82577"/>
    </physiologicalReaction>
</comment>
<comment type="catalytic activity">
    <reaction evidence="1">
        <text>3'-iodo-L-thyronine + iodide + A + H(+) = 3',5'-diiodo-L-thyronine + AH2</text>
        <dbReference type="Rhea" id="RHEA:82899"/>
        <dbReference type="ChEBI" id="CHEBI:13193"/>
        <dbReference type="ChEBI" id="CHEBI:15378"/>
        <dbReference type="ChEBI" id="CHEBI:16382"/>
        <dbReference type="ChEBI" id="CHEBI:17499"/>
        <dbReference type="ChEBI" id="CHEBI:195762"/>
        <dbReference type="ChEBI" id="CHEBI:232695"/>
    </reaction>
    <physiologicalReaction direction="right-to-left" evidence="1">
        <dbReference type="Rhea" id="RHEA:82901"/>
    </physiologicalReaction>
</comment>
<comment type="catalytic activity">
    <reaction evidence="1">
        <text>3,3'-diiodothyronamine + iodide + A + H(+) = 3,3',5'-triiodothyronamine + AH2</text>
        <dbReference type="Rhea" id="RHEA:83795"/>
        <dbReference type="ChEBI" id="CHEBI:13193"/>
        <dbReference type="ChEBI" id="CHEBI:15378"/>
        <dbReference type="ChEBI" id="CHEBI:16382"/>
        <dbReference type="ChEBI" id="CHEBI:17499"/>
        <dbReference type="ChEBI" id="CHEBI:233341"/>
        <dbReference type="ChEBI" id="CHEBI:233343"/>
    </reaction>
    <physiologicalReaction direction="right-to-left" evidence="1">
        <dbReference type="Rhea" id="RHEA:83797"/>
    </physiologicalReaction>
</comment>
<comment type="catalytic activity">
    <reaction evidence="1">
        <text>3'-iodothyronamine + iodide + A + H(+) = 3',5'-diiodothyronamine + AH2</text>
        <dbReference type="Rhea" id="RHEA:83803"/>
        <dbReference type="ChEBI" id="CHEBI:13193"/>
        <dbReference type="ChEBI" id="CHEBI:15378"/>
        <dbReference type="ChEBI" id="CHEBI:16382"/>
        <dbReference type="ChEBI" id="CHEBI:17499"/>
        <dbReference type="ChEBI" id="CHEBI:233339"/>
        <dbReference type="ChEBI" id="CHEBI:233342"/>
    </reaction>
    <physiologicalReaction direction="right-to-left" evidence="1">
        <dbReference type="Rhea" id="RHEA:83805"/>
    </physiologicalReaction>
</comment>
<comment type="activity regulation">
    <text evidence="4">Not inhibited by N(6)-propylthiouracil.</text>
</comment>
<comment type="subunit">
    <text evidence="1">Predominantly monomer. Can form homodimers but homodimerization is not essential for enzyme activity.</text>
</comment>
<comment type="subcellular location">
    <subcellularLocation>
        <location evidence="1">Endoplasmic reticulum membrane</location>
        <topology evidence="1">Single-pass type III membrane protein</topology>
    </subcellularLocation>
</comment>
<comment type="tissue specificity">
    <text evidence="4">High levels seen in the metamorphosing tail.</text>
</comment>
<comment type="similarity">
    <text evidence="5">Belongs to the iodothyronine deiodinase family.</text>
</comment>
<dbReference type="EC" id="1.21.99.4" evidence="1"/>
<dbReference type="EMBL" id="L42815">
    <property type="protein sequence ID" value="AAC42231.2"/>
    <property type="molecule type" value="Genomic_DNA"/>
</dbReference>
<dbReference type="PIR" id="T10530">
    <property type="entry name" value="T10530"/>
</dbReference>
<dbReference type="GO" id="GO:0005789">
    <property type="term" value="C:endoplasmic reticulum membrane"/>
    <property type="evidence" value="ECO:0000250"/>
    <property type="project" value="UniProtKB"/>
</dbReference>
<dbReference type="GO" id="GO:0004800">
    <property type="term" value="F:thyroxine 5'-deiodinase activity"/>
    <property type="evidence" value="ECO:0000250"/>
    <property type="project" value="UniProtKB"/>
</dbReference>
<dbReference type="GO" id="GO:0042446">
    <property type="term" value="P:hormone biosynthetic process"/>
    <property type="evidence" value="ECO:0007669"/>
    <property type="project" value="UniProtKB-KW"/>
</dbReference>
<dbReference type="GO" id="GO:0042403">
    <property type="term" value="P:thyroid hormone metabolic process"/>
    <property type="evidence" value="ECO:0000250"/>
    <property type="project" value="UniProtKB"/>
</dbReference>
<dbReference type="FunFam" id="3.40.30.10:FF:000194">
    <property type="entry name" value="Iodothyronine deiodinase"/>
    <property type="match status" value="1"/>
</dbReference>
<dbReference type="Gene3D" id="3.40.30.10">
    <property type="entry name" value="Glutaredoxin"/>
    <property type="match status" value="1"/>
</dbReference>
<dbReference type="InterPro" id="IPR000643">
    <property type="entry name" value="Iodothyronine_deiodinase"/>
</dbReference>
<dbReference type="InterPro" id="IPR008261">
    <property type="entry name" value="Iodothyronine_deiodinase_AS"/>
</dbReference>
<dbReference type="InterPro" id="IPR036249">
    <property type="entry name" value="Thioredoxin-like_sf"/>
</dbReference>
<dbReference type="PANTHER" id="PTHR11781">
    <property type="entry name" value="IODOTHYRONINE DEIODINASE"/>
    <property type="match status" value="1"/>
</dbReference>
<dbReference type="PANTHER" id="PTHR11781:SF20">
    <property type="entry name" value="TYPE II IODOTHYRONINE DEIODINASE"/>
    <property type="match status" value="1"/>
</dbReference>
<dbReference type="Pfam" id="PF00837">
    <property type="entry name" value="T4_deiodinase"/>
    <property type="match status" value="1"/>
</dbReference>
<dbReference type="PIRSF" id="PIRSF001330">
    <property type="entry name" value="IOD"/>
    <property type="match status" value="1"/>
</dbReference>
<dbReference type="SUPFAM" id="SSF52833">
    <property type="entry name" value="Thioredoxin-like"/>
    <property type="match status" value="1"/>
</dbReference>
<dbReference type="PROSITE" id="PS01205">
    <property type="entry name" value="T4_DEIODINASE"/>
    <property type="match status" value="1"/>
</dbReference>
<accession>P49896</accession>
<proteinExistence type="evidence at protein level"/>
<reference key="1">
    <citation type="journal article" date="1995" name="J. Biol. Chem.">
        <title>Cloning of a cDNA for the type II iodothyronine deiodinase.</title>
        <authorList>
            <person name="Davey J.C."/>
            <person name="Becker K.B."/>
            <person name="Schneider M.J."/>
            <person name="St Germain D.L."/>
            <person name="Galton V.A."/>
        </authorList>
    </citation>
    <scope>NUCLEOTIDE SEQUENCE [GENOMIC DNA]</scope>
    <scope>FUNCTION</scope>
    <scope>CATALYTIC ACTIVITY</scope>
    <scope>TISSUE SPECIFICITY</scope>
    <scope>ACTIVITY REGULATION</scope>
</reference>
<keyword id="KW-0256">Endoplasmic reticulum</keyword>
<keyword id="KW-0472">Membrane</keyword>
<keyword id="KW-0560">Oxidoreductase</keyword>
<keyword id="KW-0712">Selenocysteine</keyword>
<keyword id="KW-0893">Thyroid hormones biosynthesis</keyword>
<keyword id="KW-0812">Transmembrane</keyword>
<keyword id="KW-1133">Transmembrane helix</keyword>